<evidence type="ECO:0000255" key="1">
    <source>
        <dbReference type="HAMAP-Rule" id="MF_00071"/>
    </source>
</evidence>
<keyword id="KW-0997">Cell inner membrane</keyword>
<keyword id="KW-1003">Cell membrane</keyword>
<keyword id="KW-0342">GTP-binding</keyword>
<keyword id="KW-0378">Hydrolase</keyword>
<keyword id="KW-0472">Membrane</keyword>
<keyword id="KW-0547">Nucleotide-binding</keyword>
<keyword id="KW-0648">Protein biosynthesis</keyword>
<accession>B0U3D5</accession>
<reference key="1">
    <citation type="journal article" date="2010" name="J. Bacteriol.">
        <title>Whole genome sequences of two Xylella fastidiosa strains (M12 and M23) causing almond leaf scorch disease in California.</title>
        <authorList>
            <person name="Chen J."/>
            <person name="Xie G."/>
            <person name="Han S."/>
            <person name="Chertkov O."/>
            <person name="Sims D."/>
            <person name="Civerolo E.L."/>
        </authorList>
    </citation>
    <scope>NUCLEOTIDE SEQUENCE [LARGE SCALE GENOMIC DNA]</scope>
    <source>
        <strain>M12</strain>
    </source>
</reference>
<gene>
    <name evidence="1" type="primary">lepA</name>
    <name type="ordered locus">Xfasm12_1441</name>
</gene>
<proteinExistence type="inferred from homology"/>
<comment type="function">
    <text evidence="1">Required for accurate and efficient protein synthesis under certain stress conditions. May act as a fidelity factor of the translation reaction, by catalyzing a one-codon backward translocation of tRNAs on improperly translocated ribosomes. Back-translocation proceeds from a post-translocation (POST) complex to a pre-translocation (PRE) complex, thus giving elongation factor G a second chance to translocate the tRNAs correctly. Binds to ribosomes in a GTP-dependent manner.</text>
</comment>
<comment type="catalytic activity">
    <reaction evidence="1">
        <text>GTP + H2O = GDP + phosphate + H(+)</text>
        <dbReference type="Rhea" id="RHEA:19669"/>
        <dbReference type="ChEBI" id="CHEBI:15377"/>
        <dbReference type="ChEBI" id="CHEBI:15378"/>
        <dbReference type="ChEBI" id="CHEBI:37565"/>
        <dbReference type="ChEBI" id="CHEBI:43474"/>
        <dbReference type="ChEBI" id="CHEBI:58189"/>
        <dbReference type="EC" id="3.6.5.n1"/>
    </reaction>
</comment>
<comment type="subcellular location">
    <subcellularLocation>
        <location evidence="1">Cell inner membrane</location>
        <topology evidence="1">Peripheral membrane protein</topology>
        <orientation evidence="1">Cytoplasmic side</orientation>
    </subcellularLocation>
</comment>
<comment type="similarity">
    <text evidence="1">Belongs to the TRAFAC class translation factor GTPase superfamily. Classic translation factor GTPase family. LepA subfamily.</text>
</comment>
<organism>
    <name type="scientific">Xylella fastidiosa (strain M12)</name>
    <dbReference type="NCBI Taxonomy" id="405440"/>
    <lineage>
        <taxon>Bacteria</taxon>
        <taxon>Pseudomonadati</taxon>
        <taxon>Pseudomonadota</taxon>
        <taxon>Gammaproteobacteria</taxon>
        <taxon>Lysobacterales</taxon>
        <taxon>Lysobacteraceae</taxon>
        <taxon>Xylella</taxon>
    </lineage>
</organism>
<dbReference type="EC" id="3.6.5.n1" evidence="1"/>
<dbReference type="EMBL" id="CP000941">
    <property type="protein sequence ID" value="ACA12364.1"/>
    <property type="molecule type" value="Genomic_DNA"/>
</dbReference>
<dbReference type="RefSeq" id="WP_004083428.1">
    <property type="nucleotide sequence ID" value="NC_010513.1"/>
</dbReference>
<dbReference type="SMR" id="B0U3D5"/>
<dbReference type="KEGG" id="xfm:Xfasm12_1441"/>
<dbReference type="HOGENOM" id="CLU_009995_3_3_6"/>
<dbReference type="GO" id="GO:0005886">
    <property type="term" value="C:plasma membrane"/>
    <property type="evidence" value="ECO:0007669"/>
    <property type="project" value="UniProtKB-SubCell"/>
</dbReference>
<dbReference type="GO" id="GO:0005525">
    <property type="term" value="F:GTP binding"/>
    <property type="evidence" value="ECO:0007669"/>
    <property type="project" value="UniProtKB-UniRule"/>
</dbReference>
<dbReference type="GO" id="GO:0003924">
    <property type="term" value="F:GTPase activity"/>
    <property type="evidence" value="ECO:0007669"/>
    <property type="project" value="UniProtKB-UniRule"/>
</dbReference>
<dbReference type="GO" id="GO:0097216">
    <property type="term" value="F:guanosine tetraphosphate binding"/>
    <property type="evidence" value="ECO:0007669"/>
    <property type="project" value="UniProtKB-ARBA"/>
</dbReference>
<dbReference type="GO" id="GO:0043022">
    <property type="term" value="F:ribosome binding"/>
    <property type="evidence" value="ECO:0007669"/>
    <property type="project" value="UniProtKB-UniRule"/>
</dbReference>
<dbReference type="GO" id="GO:0003746">
    <property type="term" value="F:translation elongation factor activity"/>
    <property type="evidence" value="ECO:0007669"/>
    <property type="project" value="UniProtKB-UniRule"/>
</dbReference>
<dbReference type="GO" id="GO:0045727">
    <property type="term" value="P:positive regulation of translation"/>
    <property type="evidence" value="ECO:0007669"/>
    <property type="project" value="UniProtKB-UniRule"/>
</dbReference>
<dbReference type="CDD" id="cd03699">
    <property type="entry name" value="EF4_II"/>
    <property type="match status" value="1"/>
</dbReference>
<dbReference type="CDD" id="cd16260">
    <property type="entry name" value="EF4_III"/>
    <property type="match status" value="1"/>
</dbReference>
<dbReference type="CDD" id="cd01890">
    <property type="entry name" value="LepA"/>
    <property type="match status" value="1"/>
</dbReference>
<dbReference type="CDD" id="cd03709">
    <property type="entry name" value="lepA_C"/>
    <property type="match status" value="1"/>
</dbReference>
<dbReference type="FunFam" id="3.40.50.300:FF:000078">
    <property type="entry name" value="Elongation factor 4"/>
    <property type="match status" value="1"/>
</dbReference>
<dbReference type="FunFam" id="2.40.30.10:FF:000015">
    <property type="entry name" value="Translation factor GUF1, mitochondrial"/>
    <property type="match status" value="1"/>
</dbReference>
<dbReference type="FunFam" id="3.30.70.240:FF:000007">
    <property type="entry name" value="Translation factor GUF1, mitochondrial"/>
    <property type="match status" value="1"/>
</dbReference>
<dbReference type="FunFam" id="3.30.70.2570:FF:000001">
    <property type="entry name" value="Translation factor GUF1, mitochondrial"/>
    <property type="match status" value="1"/>
</dbReference>
<dbReference type="FunFam" id="3.30.70.870:FF:000004">
    <property type="entry name" value="Translation factor GUF1, mitochondrial"/>
    <property type="match status" value="1"/>
</dbReference>
<dbReference type="Gene3D" id="3.30.70.240">
    <property type="match status" value="1"/>
</dbReference>
<dbReference type="Gene3D" id="3.30.70.2570">
    <property type="entry name" value="Elongation factor 4, C-terminal domain"/>
    <property type="match status" value="1"/>
</dbReference>
<dbReference type="Gene3D" id="3.30.70.870">
    <property type="entry name" value="Elongation Factor G (Translational Gtpase), domain 3"/>
    <property type="match status" value="1"/>
</dbReference>
<dbReference type="Gene3D" id="3.40.50.300">
    <property type="entry name" value="P-loop containing nucleotide triphosphate hydrolases"/>
    <property type="match status" value="1"/>
</dbReference>
<dbReference type="Gene3D" id="2.40.30.10">
    <property type="entry name" value="Translation factors"/>
    <property type="match status" value="1"/>
</dbReference>
<dbReference type="HAMAP" id="MF_00071">
    <property type="entry name" value="LepA"/>
    <property type="match status" value="1"/>
</dbReference>
<dbReference type="InterPro" id="IPR006297">
    <property type="entry name" value="EF-4"/>
</dbReference>
<dbReference type="InterPro" id="IPR035647">
    <property type="entry name" value="EFG_III/V"/>
</dbReference>
<dbReference type="InterPro" id="IPR000640">
    <property type="entry name" value="EFG_V-like"/>
</dbReference>
<dbReference type="InterPro" id="IPR004161">
    <property type="entry name" value="EFTu-like_2"/>
</dbReference>
<dbReference type="InterPro" id="IPR031157">
    <property type="entry name" value="G_TR_CS"/>
</dbReference>
<dbReference type="InterPro" id="IPR038363">
    <property type="entry name" value="LepA_C_sf"/>
</dbReference>
<dbReference type="InterPro" id="IPR013842">
    <property type="entry name" value="LepA_CTD"/>
</dbReference>
<dbReference type="InterPro" id="IPR035654">
    <property type="entry name" value="LepA_IV"/>
</dbReference>
<dbReference type="InterPro" id="IPR027417">
    <property type="entry name" value="P-loop_NTPase"/>
</dbReference>
<dbReference type="InterPro" id="IPR005225">
    <property type="entry name" value="Small_GTP-bd"/>
</dbReference>
<dbReference type="InterPro" id="IPR000795">
    <property type="entry name" value="T_Tr_GTP-bd_dom"/>
</dbReference>
<dbReference type="InterPro" id="IPR009000">
    <property type="entry name" value="Transl_B-barrel_sf"/>
</dbReference>
<dbReference type="NCBIfam" id="TIGR01393">
    <property type="entry name" value="lepA"/>
    <property type="match status" value="1"/>
</dbReference>
<dbReference type="NCBIfam" id="TIGR00231">
    <property type="entry name" value="small_GTP"/>
    <property type="match status" value="1"/>
</dbReference>
<dbReference type="PANTHER" id="PTHR43512:SF4">
    <property type="entry name" value="TRANSLATION FACTOR GUF1 HOMOLOG, CHLOROPLASTIC"/>
    <property type="match status" value="1"/>
</dbReference>
<dbReference type="PANTHER" id="PTHR43512">
    <property type="entry name" value="TRANSLATION FACTOR GUF1-RELATED"/>
    <property type="match status" value="1"/>
</dbReference>
<dbReference type="Pfam" id="PF00679">
    <property type="entry name" value="EFG_C"/>
    <property type="match status" value="1"/>
</dbReference>
<dbReference type="Pfam" id="PF00009">
    <property type="entry name" value="GTP_EFTU"/>
    <property type="match status" value="1"/>
</dbReference>
<dbReference type="Pfam" id="PF03144">
    <property type="entry name" value="GTP_EFTU_D2"/>
    <property type="match status" value="1"/>
</dbReference>
<dbReference type="Pfam" id="PF06421">
    <property type="entry name" value="LepA_C"/>
    <property type="match status" value="1"/>
</dbReference>
<dbReference type="PRINTS" id="PR00315">
    <property type="entry name" value="ELONGATNFCT"/>
</dbReference>
<dbReference type="SMART" id="SM00838">
    <property type="entry name" value="EFG_C"/>
    <property type="match status" value="1"/>
</dbReference>
<dbReference type="SUPFAM" id="SSF54980">
    <property type="entry name" value="EF-G C-terminal domain-like"/>
    <property type="match status" value="2"/>
</dbReference>
<dbReference type="SUPFAM" id="SSF52540">
    <property type="entry name" value="P-loop containing nucleoside triphosphate hydrolases"/>
    <property type="match status" value="1"/>
</dbReference>
<dbReference type="SUPFAM" id="SSF50447">
    <property type="entry name" value="Translation proteins"/>
    <property type="match status" value="1"/>
</dbReference>
<dbReference type="PROSITE" id="PS00301">
    <property type="entry name" value="G_TR_1"/>
    <property type="match status" value="1"/>
</dbReference>
<dbReference type="PROSITE" id="PS51722">
    <property type="entry name" value="G_TR_2"/>
    <property type="match status" value="1"/>
</dbReference>
<sequence>MSSDPMRNIRNFSIIAHVDHGKSTLADRIIQLCGGLEAREMEAQVLDSNPIERERGITIKAQSVSLLYKAQDGQNYHLNLIDTPGHVDFSYEVSRSLAACEGALLVVDASQGVEAQSVANCYTAVEQGLEVVPILNKIDLPTADTERAKAEIEAVIGIDASEAVAVSAKTGLYVEQVLEAIVQRIPAPQPRDTEKLQALIIDSWFDNYLGVVSLVRVMQGEITPGNKLLVMSTGRSHQVDAVGVFTPKRKTLAKLTAGEVGWVTASIKDVHGAPVGDTLTLTSDPAPKPLPGFQEVQPRVFAGLFPVDAEDYPDLREALEKLRLNDAALRFEPENSEAMGFGFRCGFLGMLHMEIVQERLEREYDLNLITTAPTVIYEVLKTDGTLVAMDNPAKMPPINQINEIREPIIRSNILTPPDYVGAVITLCEEKRGSQIGITYLGNQVQVAYELPMAEVVLDFFDKLKSVTRGYASLDYHFLRFQEGPFVRVDTLINGDRVDALSVIVHRHQAERRGRELCEKMKDLIPRQMFDVAIQAAIGSQIISRSTVKAMRKNVLAKCYGGDISRKKKLLEKQKEGKKRMKQIGRVEIPQEAFLAVLQIDNK</sequence>
<feature type="chain" id="PRO_1000092466" description="Elongation factor 4">
    <location>
        <begin position="1"/>
        <end position="602"/>
    </location>
</feature>
<feature type="domain" description="tr-type G">
    <location>
        <begin position="7"/>
        <end position="189"/>
    </location>
</feature>
<feature type="binding site" evidence="1">
    <location>
        <begin position="19"/>
        <end position="24"/>
    </location>
    <ligand>
        <name>GTP</name>
        <dbReference type="ChEBI" id="CHEBI:37565"/>
    </ligand>
</feature>
<feature type="binding site" evidence="1">
    <location>
        <begin position="136"/>
        <end position="139"/>
    </location>
    <ligand>
        <name>GTP</name>
        <dbReference type="ChEBI" id="CHEBI:37565"/>
    </ligand>
</feature>
<protein>
    <recommendedName>
        <fullName evidence="1">Elongation factor 4</fullName>
        <shortName evidence="1">EF-4</shortName>
        <ecNumber evidence="1">3.6.5.n1</ecNumber>
    </recommendedName>
    <alternativeName>
        <fullName evidence="1">Ribosomal back-translocase LepA</fullName>
    </alternativeName>
</protein>
<name>LEPA_XYLFM</name>